<organism>
    <name type="scientific">Bos taurus</name>
    <name type="common">Bovine</name>
    <dbReference type="NCBI Taxonomy" id="9913"/>
    <lineage>
        <taxon>Eukaryota</taxon>
        <taxon>Metazoa</taxon>
        <taxon>Chordata</taxon>
        <taxon>Craniata</taxon>
        <taxon>Vertebrata</taxon>
        <taxon>Euteleostomi</taxon>
        <taxon>Mammalia</taxon>
        <taxon>Eutheria</taxon>
        <taxon>Laurasiatheria</taxon>
        <taxon>Artiodactyla</taxon>
        <taxon>Ruminantia</taxon>
        <taxon>Pecora</taxon>
        <taxon>Bovidae</taxon>
        <taxon>Bovinae</taxon>
        <taxon>Bos</taxon>
    </lineage>
</organism>
<dbReference type="EMBL" id="BC114047">
    <property type="protein sequence ID" value="AAI14048.1"/>
    <property type="molecule type" value="mRNA"/>
</dbReference>
<dbReference type="RefSeq" id="NP_001039485.1">
    <property type="nucleotide sequence ID" value="NM_001046020.2"/>
</dbReference>
<dbReference type="RefSeq" id="XP_005205858.1">
    <property type="nucleotide sequence ID" value="XM_005205801.5"/>
</dbReference>
<dbReference type="RefSeq" id="XP_005205859.1">
    <property type="nucleotide sequence ID" value="XM_005205802.3"/>
</dbReference>
<dbReference type="RefSeq" id="XP_005205860.1">
    <property type="nucleotide sequence ID" value="XM_005205803.4"/>
</dbReference>
<dbReference type="RefSeq" id="XP_015326241.1">
    <property type="nucleotide sequence ID" value="XM_015470755.3"/>
</dbReference>
<dbReference type="SMR" id="Q29RS5"/>
<dbReference type="FunCoup" id="Q29RS5">
    <property type="interactions" value="219"/>
</dbReference>
<dbReference type="STRING" id="9913.ENSBTAP00000005523"/>
<dbReference type="PaxDb" id="9913-ENSBTAP00000005523"/>
<dbReference type="GeneID" id="508990"/>
<dbReference type="KEGG" id="bta:508990"/>
<dbReference type="CTD" id="5919"/>
<dbReference type="VEuPathDB" id="HostDB:ENSBTAG00000004215"/>
<dbReference type="eggNOG" id="ENOG502SE7C">
    <property type="taxonomic scope" value="Eukaryota"/>
</dbReference>
<dbReference type="HOGENOM" id="CLU_138029_0_0_1"/>
<dbReference type="InParanoid" id="Q29RS5"/>
<dbReference type="OMA" id="QWAFQKT"/>
<dbReference type="OrthoDB" id="9894305at2759"/>
<dbReference type="TreeFam" id="TF330938"/>
<dbReference type="Reactome" id="R-BTA-114608">
    <property type="pathway name" value="Platelet degranulation"/>
</dbReference>
<dbReference type="Proteomes" id="UP000009136">
    <property type="component" value="Chromosome 4"/>
</dbReference>
<dbReference type="Bgee" id="ENSBTAG00000004215">
    <property type="expression patterns" value="Expressed in cortex of kidney and 104 other cell types or tissues"/>
</dbReference>
<dbReference type="GO" id="GO:0031012">
    <property type="term" value="C:extracellular matrix"/>
    <property type="evidence" value="ECO:0000318"/>
    <property type="project" value="GO_Central"/>
</dbReference>
<dbReference type="GO" id="GO:0005576">
    <property type="term" value="C:extracellular region"/>
    <property type="evidence" value="ECO:0000250"/>
    <property type="project" value="UniProtKB"/>
</dbReference>
<dbReference type="GO" id="GO:0005615">
    <property type="term" value="C:extracellular space"/>
    <property type="evidence" value="ECO:0000318"/>
    <property type="project" value="GO_Central"/>
</dbReference>
<dbReference type="GO" id="GO:0005102">
    <property type="term" value="F:signaling receptor binding"/>
    <property type="evidence" value="ECO:0000318"/>
    <property type="project" value="GO_Central"/>
</dbReference>
<dbReference type="GO" id="GO:0030154">
    <property type="term" value="P:cell differentiation"/>
    <property type="evidence" value="ECO:0007669"/>
    <property type="project" value="UniProtKB-KW"/>
</dbReference>
<dbReference type="GO" id="GO:0006935">
    <property type="term" value="P:chemotaxis"/>
    <property type="evidence" value="ECO:0007669"/>
    <property type="project" value="UniProtKB-KW"/>
</dbReference>
<dbReference type="GO" id="GO:0006954">
    <property type="term" value="P:inflammatory response"/>
    <property type="evidence" value="ECO:0007669"/>
    <property type="project" value="UniProtKB-KW"/>
</dbReference>
<dbReference type="GO" id="GO:0045087">
    <property type="term" value="P:innate immune response"/>
    <property type="evidence" value="ECO:0000318"/>
    <property type="project" value="GO_Central"/>
</dbReference>
<dbReference type="GO" id="GO:0050921">
    <property type="term" value="P:positive regulation of chemotaxis"/>
    <property type="evidence" value="ECO:0000250"/>
    <property type="project" value="UniProtKB"/>
</dbReference>
<dbReference type="GO" id="GO:0045600">
    <property type="term" value="P:positive regulation of fat cell differentiation"/>
    <property type="evidence" value="ECO:0000250"/>
    <property type="project" value="UniProtKB"/>
</dbReference>
<dbReference type="GO" id="GO:0001934">
    <property type="term" value="P:positive regulation of protein phosphorylation"/>
    <property type="evidence" value="ECO:0000250"/>
    <property type="project" value="UniProtKB"/>
</dbReference>
<dbReference type="GO" id="GO:0046626">
    <property type="term" value="P:regulation of insulin receptor signaling pathway"/>
    <property type="evidence" value="ECO:0000250"/>
    <property type="project" value="UniProtKB"/>
</dbReference>
<dbReference type="GO" id="GO:0050994">
    <property type="term" value="P:regulation of lipid catabolic process"/>
    <property type="evidence" value="ECO:0000250"/>
    <property type="project" value="UniProtKB"/>
</dbReference>
<dbReference type="FunFam" id="3.10.450.10:FF:000014">
    <property type="entry name" value="Retinoic acid receptor responder 2"/>
    <property type="match status" value="1"/>
</dbReference>
<dbReference type="Gene3D" id="3.10.450.10">
    <property type="match status" value="1"/>
</dbReference>
<dbReference type="InterPro" id="IPR029562">
    <property type="entry name" value="Chemerin"/>
</dbReference>
<dbReference type="InterPro" id="IPR046350">
    <property type="entry name" value="Cystatin_sf"/>
</dbReference>
<dbReference type="PANTHER" id="PTHR15106">
    <property type="entry name" value="RETINOIC ACID RECEPTOR RESPONDER PROTEIN 2"/>
    <property type="match status" value="1"/>
</dbReference>
<dbReference type="PANTHER" id="PTHR15106:SF2">
    <property type="entry name" value="RETINOIC ACID RECEPTOR RESPONDER PROTEIN 2"/>
    <property type="match status" value="1"/>
</dbReference>
<dbReference type="SUPFAM" id="SSF54403">
    <property type="entry name" value="Cystatin/monellin"/>
    <property type="match status" value="1"/>
</dbReference>
<feature type="signal peptide" evidence="2">
    <location>
        <begin position="1"/>
        <end position="20"/>
    </location>
</feature>
<feature type="chain" id="PRO_0000267643" description="Retinoic acid receptor responder protein 2">
    <location>
        <begin position="21"/>
        <end position="155"/>
    </location>
</feature>
<feature type="propeptide" id="PRO_0000424868" evidence="1">
    <location>
        <begin position="156"/>
        <end position="162"/>
    </location>
</feature>
<feature type="disulfide bond" evidence="1">
    <location>
        <begin position="77"/>
        <end position="87"/>
    </location>
</feature>
<feature type="disulfide bond" evidence="1">
    <location>
        <begin position="98"/>
        <end position="117"/>
    </location>
</feature>
<feature type="disulfide bond" evidence="4">
    <location>
        <begin position="101"/>
        <end position="135"/>
    </location>
</feature>
<name>RARR2_BOVIN</name>
<protein>
    <recommendedName>
        <fullName>Retinoic acid receptor responder protein 2</fullName>
    </recommendedName>
    <alternativeName>
        <fullName>Chemerin</fullName>
    </alternativeName>
</protein>
<keyword id="KW-0145">Chemotaxis</keyword>
<keyword id="KW-0221">Differentiation</keyword>
<keyword id="KW-1015">Disulfide bond</keyword>
<keyword id="KW-0395">Inflammatory response</keyword>
<keyword id="KW-1185">Reference proteome</keyword>
<keyword id="KW-0964">Secreted</keyword>
<keyword id="KW-0732">Signal</keyword>
<proteinExistence type="evidence at transcript level"/>
<gene>
    <name type="primary">RARRES2</name>
</gene>
<accession>Q29RS5</accession>
<evidence type="ECO:0000250" key="1"/>
<evidence type="ECO:0000250" key="2">
    <source>
        <dbReference type="UniProtKB" id="Q99969"/>
    </source>
</evidence>
<evidence type="ECO:0000250" key="3">
    <source>
        <dbReference type="UniProtKB" id="Q9DD06"/>
    </source>
</evidence>
<evidence type="ECO:0000255" key="4"/>
<reference key="1">
    <citation type="submission" date="2006-02" db="EMBL/GenBank/DDBJ databases">
        <authorList>
            <consortium name="NIH - Mammalian Gene Collection (MGC) project"/>
        </authorList>
    </citation>
    <scope>NUCLEOTIDE SEQUENCE [LARGE SCALE MRNA]</scope>
    <source>
        <strain>Hereford</strain>
        <tissue>Testis</tissue>
    </source>
</reference>
<comment type="function">
    <text evidence="2">Adipocyte-secreted protein (adipokine) that regulates adipogenesis, metabolism and inflammation through activation of the chemokine-like receptor 1 (CMKLR1). Also acts as a ligand for CMKLR2. Can also bind to C-C chemokine receptor-like 2 (CCRL2), but with a lower affinity than it does to CMKLR1 or CMKLR2. Positively regulates adipocyte differentiation, modulates the expression of adipocyte genes involved in lipid and glucose metabolism and might play a role in angiogenesis, a process essential for the expansion of white adipose tissue. Also acts as a pro-inflammatory adipokine, causing an increase in secretion of pro-inflammatory and prodiabetic adipokines, which further impair adipose tissue metabolic function and have negative systemic effects including impaired insulin sensitivity, altered glucose and lipid metabolism, and a decrease in vascular function in other tissues. Can have both pro- and anti-inflammatory properties depending on the modality of enzymatic cleavage by different classes of proteases. Acts as a chemotactic factor for leukocyte populations expressing CMKLR1, particularly immature plasmacytoid dendritic cells, but also immature myeloid DCs, macrophages and natural killer cells. Exerts an anti-inflammatory role by preventing TNF/TNFA-induced VCAM1 expression and monocytes adhesion in vascular endothelial cells. The effect is mediated via inhibiting activation of NF-kappa-B and CRK/p38 through stimulation of AKT1/NOS3 signaling and nitric oxide production. Exhibits an antimicrobial function in the skin (By similarity).</text>
</comment>
<comment type="subcellular location">
    <subcellularLocation>
        <location evidence="3">Secreted</location>
    </subcellularLocation>
</comment>
<comment type="PTM">
    <text evidence="2">Secreted in an inactive precursor form, prochemerin, which is proteolytically processed by a variety of extracellular proteases to generate forms with differing levels of bioactivity. For example, the removal of five amino acids results in chemerin-157, which exhibits the highest activity, while removal of six amino acids results in chemerin-156 which has slightly less activity. Some proteases are able to cleave at more than one site and chemerin forms may be sequentially processed by different enzymes to modulate activity levels. The coordinated expression and activity of chemerin-modifying enzymes is essential for regulating its bioactivation, inactivation and, consequently, biological function. Cathepsin G cleaves six C-terminal amino acids from prochemerin (chemerin-156), elastase is able to cleave five (chemerin-157), seven (chemerin-155) or ten (chemerin-152), plasmin cleaves four amino acids (chemerin-158), and tryptase cleaves four (chemerin-158) or seven (chemerin-155). Multiple cleavages might be required to fully activate chemerin, with an initial tryptase cleavage resulting in chemerin with low activity (chemerin-158), and a second cleavage by carboxypeptidase N or B producing highly active chemerin (chemerin-157) (By similarity).</text>
</comment>
<sequence>MWQLLLPLALGLGTMGLGRAELTTAQHRGLQVALEEFHKHPPVLWAFQVTSVDNAADTLFPAGQFVRLEFKLQQTSCRKKDWRKEDCKVKPNGRKRKCLACIKLDSKDQVLGRMVHCPIQTQVQRELDDAQDAQCSRVERAGEDPHSYYLPGQFAFIKALSP</sequence>